<keyword id="KW-0030">Aminoacyl-tRNA synthetase</keyword>
<keyword id="KW-0067">ATP-binding</keyword>
<keyword id="KW-0963">Cytoplasm</keyword>
<keyword id="KW-0436">Ligase</keyword>
<keyword id="KW-0479">Metal-binding</keyword>
<keyword id="KW-0547">Nucleotide-binding</keyword>
<keyword id="KW-0648">Protein biosynthesis</keyword>
<keyword id="KW-0694">RNA-binding</keyword>
<keyword id="KW-0820">tRNA-binding</keyword>
<keyword id="KW-0862">Zinc</keyword>
<sequence>MATSQRKILVTSALPYANGPIHLGHMLEYIQTDIWSRYQKLRGHECHYICADDAHGTPIMLKAQQLGMAPEEMIAQVNKEHQQDFADFNIAFDNYHSTHSEENRVLASDIYLKLRANGYIKSKSISQLFDPEKSMFLPDRFVKGTCPKCKSPDQYGDNCDACGATYSPTELINPKSAVSGATPVMKDTEHFFFDLPAFEDMLKEWTRSGALQTEMANKLDEWFEQGLQQWDITRDAPYFGFEIPDAPGKYFYVWLDAPIGYMGSFKNLCDKHPELSFDEFWAKDSKAEVYHFIGKDIVYFHSLFWPAMLHGSGYRQPNSVYAHGYVTVNGAKMSKSKGTFIKARTYLDHLDPEYLRYYYAAKLSSRIDDLDLNLEDFVQRVNSDLVGKLVNLASRTAGFITKRFDGKLAKIADTTLTDAFLAKQEQIAEFYETREYGKAMREIMALADIANGFVADAAPWQLVKQDDQQETAHQVCSNALNLFRILVTYLKPVLPRLALDVEAFFQQTLTWDALNQDMAGHEIAPFKAMMQRVELEKVNAMVADSKENLQATSEPEAPKGPLATDPISDTINFEDFAKIDLRIARIVKAEHVAEADKLLKLQLDIGGETRQVFAGIKSAYSPEDLEGKLTVMVANLAPRKMRFGMSEGMVLAAGPGGSDLWILEPHEGAQPGMRVK</sequence>
<reference key="1">
    <citation type="submission" date="2006-09" db="EMBL/GenBank/DDBJ databases">
        <title>Complete sequence of chromosome 1 of Shewanella sp. ANA-3.</title>
        <authorList>
            <person name="Copeland A."/>
            <person name="Lucas S."/>
            <person name="Lapidus A."/>
            <person name="Barry K."/>
            <person name="Detter J.C."/>
            <person name="Glavina del Rio T."/>
            <person name="Hammon N."/>
            <person name="Israni S."/>
            <person name="Dalin E."/>
            <person name="Tice H."/>
            <person name="Pitluck S."/>
            <person name="Chertkov O."/>
            <person name="Brettin T."/>
            <person name="Bruce D."/>
            <person name="Han C."/>
            <person name="Tapia R."/>
            <person name="Gilna P."/>
            <person name="Schmutz J."/>
            <person name="Larimer F."/>
            <person name="Land M."/>
            <person name="Hauser L."/>
            <person name="Kyrpides N."/>
            <person name="Kim E."/>
            <person name="Newman D."/>
            <person name="Salticov C."/>
            <person name="Konstantinidis K."/>
            <person name="Klappenback J."/>
            <person name="Tiedje J."/>
            <person name="Richardson P."/>
        </authorList>
    </citation>
    <scope>NUCLEOTIDE SEQUENCE [LARGE SCALE GENOMIC DNA]</scope>
    <source>
        <strain>ANA-3</strain>
    </source>
</reference>
<name>SYM_SHESA</name>
<protein>
    <recommendedName>
        <fullName evidence="1">Methionine--tRNA ligase</fullName>
        <ecNumber evidence="1">6.1.1.10</ecNumber>
    </recommendedName>
    <alternativeName>
        <fullName evidence="1">Methionyl-tRNA synthetase</fullName>
        <shortName evidence="1">MetRS</shortName>
    </alternativeName>
</protein>
<organism>
    <name type="scientific">Shewanella sp. (strain ANA-3)</name>
    <dbReference type="NCBI Taxonomy" id="94122"/>
    <lineage>
        <taxon>Bacteria</taxon>
        <taxon>Pseudomonadati</taxon>
        <taxon>Pseudomonadota</taxon>
        <taxon>Gammaproteobacteria</taxon>
        <taxon>Alteromonadales</taxon>
        <taxon>Shewanellaceae</taxon>
        <taxon>Shewanella</taxon>
    </lineage>
</organism>
<comment type="function">
    <text evidence="1">Is required not only for elongation of protein synthesis but also for the initiation of all mRNA translation through initiator tRNA(fMet) aminoacylation.</text>
</comment>
<comment type="catalytic activity">
    <reaction evidence="1">
        <text>tRNA(Met) + L-methionine + ATP = L-methionyl-tRNA(Met) + AMP + diphosphate</text>
        <dbReference type="Rhea" id="RHEA:13481"/>
        <dbReference type="Rhea" id="RHEA-COMP:9667"/>
        <dbReference type="Rhea" id="RHEA-COMP:9698"/>
        <dbReference type="ChEBI" id="CHEBI:30616"/>
        <dbReference type="ChEBI" id="CHEBI:33019"/>
        <dbReference type="ChEBI" id="CHEBI:57844"/>
        <dbReference type="ChEBI" id="CHEBI:78442"/>
        <dbReference type="ChEBI" id="CHEBI:78530"/>
        <dbReference type="ChEBI" id="CHEBI:456215"/>
        <dbReference type="EC" id="6.1.1.10"/>
    </reaction>
</comment>
<comment type="cofactor">
    <cofactor evidence="1">
        <name>Zn(2+)</name>
        <dbReference type="ChEBI" id="CHEBI:29105"/>
    </cofactor>
    <text evidence="1">Binds 1 zinc ion per subunit.</text>
</comment>
<comment type="subunit">
    <text evidence="1">Homodimer.</text>
</comment>
<comment type="subcellular location">
    <subcellularLocation>
        <location evidence="1">Cytoplasm</location>
    </subcellularLocation>
</comment>
<comment type="similarity">
    <text evidence="1">Belongs to the class-I aminoacyl-tRNA synthetase family. MetG type 1 subfamily.</text>
</comment>
<accession>A0KW24</accession>
<feature type="chain" id="PRO_0000331909" description="Methionine--tRNA ligase">
    <location>
        <begin position="1"/>
        <end position="676"/>
    </location>
</feature>
<feature type="domain" description="tRNA-binding" evidence="1">
    <location>
        <begin position="575"/>
        <end position="676"/>
    </location>
</feature>
<feature type="short sequence motif" description="'HIGH' region">
    <location>
        <begin position="15"/>
        <end position="25"/>
    </location>
</feature>
<feature type="short sequence motif" description="'KMSKS' region">
    <location>
        <begin position="332"/>
        <end position="336"/>
    </location>
</feature>
<feature type="binding site" evidence="1">
    <location>
        <position position="146"/>
    </location>
    <ligand>
        <name>Zn(2+)</name>
        <dbReference type="ChEBI" id="CHEBI:29105"/>
    </ligand>
</feature>
<feature type="binding site" evidence="1">
    <location>
        <position position="149"/>
    </location>
    <ligand>
        <name>Zn(2+)</name>
        <dbReference type="ChEBI" id="CHEBI:29105"/>
    </ligand>
</feature>
<feature type="binding site" evidence="1">
    <location>
        <position position="159"/>
    </location>
    <ligand>
        <name>Zn(2+)</name>
        <dbReference type="ChEBI" id="CHEBI:29105"/>
    </ligand>
</feature>
<feature type="binding site" evidence="1">
    <location>
        <position position="162"/>
    </location>
    <ligand>
        <name>Zn(2+)</name>
        <dbReference type="ChEBI" id="CHEBI:29105"/>
    </ligand>
</feature>
<feature type="binding site" evidence="1">
    <location>
        <position position="335"/>
    </location>
    <ligand>
        <name>ATP</name>
        <dbReference type="ChEBI" id="CHEBI:30616"/>
    </ligand>
</feature>
<proteinExistence type="inferred from homology"/>
<evidence type="ECO:0000255" key="1">
    <source>
        <dbReference type="HAMAP-Rule" id="MF_00098"/>
    </source>
</evidence>
<gene>
    <name evidence="1" type="primary">metG</name>
    <name type="ordered locus">Shewana3_1760</name>
</gene>
<dbReference type="EC" id="6.1.1.10" evidence="1"/>
<dbReference type="EMBL" id="CP000469">
    <property type="protein sequence ID" value="ABK47993.1"/>
    <property type="molecule type" value="Genomic_DNA"/>
</dbReference>
<dbReference type="RefSeq" id="WP_011716776.1">
    <property type="nucleotide sequence ID" value="NC_008577.1"/>
</dbReference>
<dbReference type="SMR" id="A0KW24"/>
<dbReference type="STRING" id="94122.Shewana3_1760"/>
<dbReference type="KEGG" id="shn:Shewana3_1760"/>
<dbReference type="eggNOG" id="COG0073">
    <property type="taxonomic scope" value="Bacteria"/>
</dbReference>
<dbReference type="eggNOG" id="COG0143">
    <property type="taxonomic scope" value="Bacteria"/>
</dbReference>
<dbReference type="HOGENOM" id="CLU_009710_7_0_6"/>
<dbReference type="OrthoDB" id="9810191at2"/>
<dbReference type="Proteomes" id="UP000002589">
    <property type="component" value="Chromosome"/>
</dbReference>
<dbReference type="GO" id="GO:0005829">
    <property type="term" value="C:cytosol"/>
    <property type="evidence" value="ECO:0007669"/>
    <property type="project" value="TreeGrafter"/>
</dbReference>
<dbReference type="GO" id="GO:0005524">
    <property type="term" value="F:ATP binding"/>
    <property type="evidence" value="ECO:0007669"/>
    <property type="project" value="UniProtKB-UniRule"/>
</dbReference>
<dbReference type="GO" id="GO:0046872">
    <property type="term" value="F:metal ion binding"/>
    <property type="evidence" value="ECO:0007669"/>
    <property type="project" value="UniProtKB-KW"/>
</dbReference>
<dbReference type="GO" id="GO:0004825">
    <property type="term" value="F:methionine-tRNA ligase activity"/>
    <property type="evidence" value="ECO:0007669"/>
    <property type="project" value="UniProtKB-UniRule"/>
</dbReference>
<dbReference type="GO" id="GO:0000049">
    <property type="term" value="F:tRNA binding"/>
    <property type="evidence" value="ECO:0007669"/>
    <property type="project" value="UniProtKB-KW"/>
</dbReference>
<dbReference type="GO" id="GO:0006431">
    <property type="term" value="P:methionyl-tRNA aminoacylation"/>
    <property type="evidence" value="ECO:0007669"/>
    <property type="project" value="UniProtKB-UniRule"/>
</dbReference>
<dbReference type="CDD" id="cd07957">
    <property type="entry name" value="Anticodon_Ia_Met"/>
    <property type="match status" value="1"/>
</dbReference>
<dbReference type="CDD" id="cd00814">
    <property type="entry name" value="MetRS_core"/>
    <property type="match status" value="1"/>
</dbReference>
<dbReference type="CDD" id="cd02800">
    <property type="entry name" value="tRNA_bind_EcMetRS_like"/>
    <property type="match status" value="1"/>
</dbReference>
<dbReference type="FunFam" id="1.10.730.10:FF:000005">
    <property type="entry name" value="Methionine--tRNA ligase"/>
    <property type="match status" value="1"/>
</dbReference>
<dbReference type="FunFam" id="2.20.28.20:FF:000001">
    <property type="entry name" value="Methionine--tRNA ligase"/>
    <property type="match status" value="1"/>
</dbReference>
<dbReference type="FunFam" id="2.40.50.140:FF:000042">
    <property type="entry name" value="Methionine--tRNA ligase"/>
    <property type="match status" value="1"/>
</dbReference>
<dbReference type="Gene3D" id="3.40.50.620">
    <property type="entry name" value="HUPs"/>
    <property type="match status" value="1"/>
</dbReference>
<dbReference type="Gene3D" id="1.10.730.10">
    <property type="entry name" value="Isoleucyl-tRNA Synthetase, Domain 1"/>
    <property type="match status" value="1"/>
</dbReference>
<dbReference type="Gene3D" id="2.20.28.20">
    <property type="entry name" value="Methionyl-tRNA synthetase, Zn-domain"/>
    <property type="match status" value="1"/>
</dbReference>
<dbReference type="Gene3D" id="2.40.50.140">
    <property type="entry name" value="Nucleic acid-binding proteins"/>
    <property type="match status" value="1"/>
</dbReference>
<dbReference type="HAMAP" id="MF_00098">
    <property type="entry name" value="Met_tRNA_synth_type1"/>
    <property type="match status" value="1"/>
</dbReference>
<dbReference type="InterPro" id="IPR001412">
    <property type="entry name" value="aa-tRNA-synth_I_CS"/>
</dbReference>
<dbReference type="InterPro" id="IPR041872">
    <property type="entry name" value="Anticodon_Met"/>
</dbReference>
<dbReference type="InterPro" id="IPR004495">
    <property type="entry name" value="Met-tRNA-synth_bsu_C"/>
</dbReference>
<dbReference type="InterPro" id="IPR023458">
    <property type="entry name" value="Met-tRNA_ligase_1"/>
</dbReference>
<dbReference type="InterPro" id="IPR014758">
    <property type="entry name" value="Met-tRNA_synth"/>
</dbReference>
<dbReference type="InterPro" id="IPR015413">
    <property type="entry name" value="Methionyl/Leucyl_tRNA_Synth"/>
</dbReference>
<dbReference type="InterPro" id="IPR033911">
    <property type="entry name" value="MetRS_core"/>
</dbReference>
<dbReference type="InterPro" id="IPR029038">
    <property type="entry name" value="MetRS_Zn"/>
</dbReference>
<dbReference type="InterPro" id="IPR012340">
    <property type="entry name" value="NA-bd_OB-fold"/>
</dbReference>
<dbReference type="InterPro" id="IPR014729">
    <property type="entry name" value="Rossmann-like_a/b/a_fold"/>
</dbReference>
<dbReference type="InterPro" id="IPR002547">
    <property type="entry name" value="tRNA-bd_dom"/>
</dbReference>
<dbReference type="InterPro" id="IPR009080">
    <property type="entry name" value="tRNAsynth_Ia_anticodon-bd"/>
</dbReference>
<dbReference type="NCBIfam" id="TIGR00398">
    <property type="entry name" value="metG"/>
    <property type="match status" value="1"/>
</dbReference>
<dbReference type="NCBIfam" id="TIGR00399">
    <property type="entry name" value="metG_C_term"/>
    <property type="match status" value="1"/>
</dbReference>
<dbReference type="NCBIfam" id="NF001100">
    <property type="entry name" value="PRK00133.1"/>
    <property type="match status" value="1"/>
</dbReference>
<dbReference type="PANTHER" id="PTHR45765">
    <property type="entry name" value="METHIONINE--TRNA LIGASE"/>
    <property type="match status" value="1"/>
</dbReference>
<dbReference type="PANTHER" id="PTHR45765:SF1">
    <property type="entry name" value="METHIONINE--TRNA LIGASE, CYTOPLASMIC"/>
    <property type="match status" value="1"/>
</dbReference>
<dbReference type="Pfam" id="PF19303">
    <property type="entry name" value="Anticodon_3"/>
    <property type="match status" value="1"/>
</dbReference>
<dbReference type="Pfam" id="PF09334">
    <property type="entry name" value="tRNA-synt_1g"/>
    <property type="match status" value="1"/>
</dbReference>
<dbReference type="Pfam" id="PF01588">
    <property type="entry name" value="tRNA_bind"/>
    <property type="match status" value="1"/>
</dbReference>
<dbReference type="PRINTS" id="PR01041">
    <property type="entry name" value="TRNASYNTHMET"/>
</dbReference>
<dbReference type="SUPFAM" id="SSF47323">
    <property type="entry name" value="Anticodon-binding domain of a subclass of class I aminoacyl-tRNA synthetases"/>
    <property type="match status" value="1"/>
</dbReference>
<dbReference type="SUPFAM" id="SSF57770">
    <property type="entry name" value="Methionyl-tRNA synthetase (MetRS), Zn-domain"/>
    <property type="match status" value="1"/>
</dbReference>
<dbReference type="SUPFAM" id="SSF50249">
    <property type="entry name" value="Nucleic acid-binding proteins"/>
    <property type="match status" value="1"/>
</dbReference>
<dbReference type="SUPFAM" id="SSF52374">
    <property type="entry name" value="Nucleotidylyl transferase"/>
    <property type="match status" value="1"/>
</dbReference>
<dbReference type="PROSITE" id="PS00178">
    <property type="entry name" value="AA_TRNA_LIGASE_I"/>
    <property type="match status" value="1"/>
</dbReference>
<dbReference type="PROSITE" id="PS50886">
    <property type="entry name" value="TRBD"/>
    <property type="match status" value="1"/>
</dbReference>